<gene>
    <name type="primary">Pli</name>
    <name type="ORF">CG5212</name>
</gene>
<comment type="function">
    <text>Scaffold protein involved in the Toll signaling pathway via its interaction with pelle/pll kinase.</text>
</comment>
<comment type="subunit">
    <text evidence="2">Interacts with pll.</text>
</comment>
<comment type="interaction">
    <interactant intactId="EBI-92779">
        <id>O77237</id>
    </interactant>
    <interactant intactId="EBI-105009">
        <id>Q9VWL9</id>
        <label>RhoGAP18B</label>
    </interactant>
    <organismsDiffer>false</organismsDiffer>
    <experiments>3</experiments>
</comment>
<comment type="developmental stage">
    <text evidence="2">Expressed both maternally and zygotically with low levels of expression throughout the life cycle.</text>
</comment>
<comment type="similarity">
    <text evidence="4">Belongs to the pellino family.</text>
</comment>
<keyword id="KW-0597">Phosphoprotein</keyword>
<keyword id="KW-1185">Reference proteome</keyword>
<organism>
    <name type="scientific">Drosophila melanogaster</name>
    <name type="common">Fruit fly</name>
    <dbReference type="NCBI Taxonomy" id="7227"/>
    <lineage>
        <taxon>Eukaryota</taxon>
        <taxon>Metazoa</taxon>
        <taxon>Ecdysozoa</taxon>
        <taxon>Arthropoda</taxon>
        <taxon>Hexapoda</taxon>
        <taxon>Insecta</taxon>
        <taxon>Pterygota</taxon>
        <taxon>Neoptera</taxon>
        <taxon>Endopterygota</taxon>
        <taxon>Diptera</taxon>
        <taxon>Brachycera</taxon>
        <taxon>Muscomorpha</taxon>
        <taxon>Ephydroidea</taxon>
        <taxon>Drosophilidae</taxon>
        <taxon>Drosophila</taxon>
        <taxon>Sophophora</taxon>
    </lineage>
</organism>
<evidence type="ECO:0000256" key="1">
    <source>
        <dbReference type="SAM" id="MobiDB-lite"/>
    </source>
</evidence>
<evidence type="ECO:0000269" key="2">
    <source>
    </source>
</evidence>
<evidence type="ECO:0000269" key="3">
    <source>
    </source>
</evidence>
<evidence type="ECO:0000305" key="4"/>
<proteinExistence type="evidence at protein level"/>
<name>PELI_DROME</name>
<accession>O77237</accession>
<protein>
    <recommendedName>
        <fullName>Protein pellino</fullName>
    </recommendedName>
</protein>
<feature type="chain" id="PRO_0000194178" description="Protein pellino">
    <location>
        <begin position="1"/>
        <end position="424"/>
    </location>
</feature>
<feature type="region of interest" description="Disordered" evidence="1">
    <location>
        <begin position="1"/>
        <end position="21"/>
    </location>
</feature>
<feature type="modified residue" description="Phosphoserine" evidence="3">
    <location>
        <position position="10"/>
    </location>
</feature>
<sequence>MVKRTDGTESPILAEDGGDGHDKPRLRYGELVILGYNGYLPQGDRGRRRSKFVLHKRTEASGVKRSKHYIVQSPQTSKAILDANQHSISYTLSRNQAVIVEYKEDTETDMFQVGRSSESPIDFVVMDTLPGDKKDAKVMQSTISRFACRILVNRCEPAKARIFAAGFDSSRNIFLGEKATKWQDNVEIDGLTTNGVLIMHPKGSFCGGNAKCGLWRECSVGGDVFSLRESRSAQQKGQPIYDECNILQDGTLIDLCGATLLWRSAEGLQHSPTKHDLEKLIDAINAGRPQCPVGLNTLVIPRKVNIGDQVNQPYVYLNCGHVQGHHDWGQDENTGARRCPMCLELGPVVTLCMGLEPAFYVDVGAPTYAFNPCGHMATEKTVKYWANVEIPHGTNGFQAVCPFCATPLDGATGYIKLIFQDNLD</sequence>
<reference key="1">
    <citation type="journal article" date="1999" name="Mech. Dev.">
        <title>Oligomerisation of Tube and Pelle leads to nuclear localisation of dorsal.</title>
        <authorList>
            <person name="Grosshans J."/>
            <person name="Schnorrer F."/>
            <person name="Nuesslein-Volhard C."/>
        </authorList>
    </citation>
    <scope>NUCLEOTIDE SEQUENCE [MRNA]</scope>
    <scope>DEVELOPMENTAL STAGE</scope>
    <scope>INTERACTION WITH PLL</scope>
</reference>
<reference key="2">
    <citation type="journal article" date="2000" name="Science">
        <title>The genome sequence of Drosophila melanogaster.</title>
        <authorList>
            <person name="Adams M.D."/>
            <person name="Celniker S.E."/>
            <person name="Holt R.A."/>
            <person name="Evans C.A."/>
            <person name="Gocayne J.D."/>
            <person name="Amanatides P.G."/>
            <person name="Scherer S.E."/>
            <person name="Li P.W."/>
            <person name="Hoskins R.A."/>
            <person name="Galle R.F."/>
            <person name="George R.A."/>
            <person name="Lewis S.E."/>
            <person name="Richards S."/>
            <person name="Ashburner M."/>
            <person name="Henderson S.N."/>
            <person name="Sutton G.G."/>
            <person name="Wortman J.R."/>
            <person name="Yandell M.D."/>
            <person name="Zhang Q."/>
            <person name="Chen L.X."/>
            <person name="Brandon R.C."/>
            <person name="Rogers Y.-H.C."/>
            <person name="Blazej R.G."/>
            <person name="Champe M."/>
            <person name="Pfeiffer B.D."/>
            <person name="Wan K.H."/>
            <person name="Doyle C."/>
            <person name="Baxter E.G."/>
            <person name="Helt G."/>
            <person name="Nelson C.R."/>
            <person name="Miklos G.L.G."/>
            <person name="Abril J.F."/>
            <person name="Agbayani A."/>
            <person name="An H.-J."/>
            <person name="Andrews-Pfannkoch C."/>
            <person name="Baldwin D."/>
            <person name="Ballew R.M."/>
            <person name="Basu A."/>
            <person name="Baxendale J."/>
            <person name="Bayraktaroglu L."/>
            <person name="Beasley E.M."/>
            <person name="Beeson K.Y."/>
            <person name="Benos P.V."/>
            <person name="Berman B.P."/>
            <person name="Bhandari D."/>
            <person name="Bolshakov S."/>
            <person name="Borkova D."/>
            <person name="Botchan M.R."/>
            <person name="Bouck J."/>
            <person name="Brokstein P."/>
            <person name="Brottier P."/>
            <person name="Burtis K.C."/>
            <person name="Busam D.A."/>
            <person name="Butler H."/>
            <person name="Cadieu E."/>
            <person name="Center A."/>
            <person name="Chandra I."/>
            <person name="Cherry J.M."/>
            <person name="Cawley S."/>
            <person name="Dahlke C."/>
            <person name="Davenport L.B."/>
            <person name="Davies P."/>
            <person name="de Pablos B."/>
            <person name="Delcher A."/>
            <person name="Deng Z."/>
            <person name="Mays A.D."/>
            <person name="Dew I."/>
            <person name="Dietz S.M."/>
            <person name="Dodson K."/>
            <person name="Doup L.E."/>
            <person name="Downes M."/>
            <person name="Dugan-Rocha S."/>
            <person name="Dunkov B.C."/>
            <person name="Dunn P."/>
            <person name="Durbin K.J."/>
            <person name="Evangelista C.C."/>
            <person name="Ferraz C."/>
            <person name="Ferriera S."/>
            <person name="Fleischmann W."/>
            <person name="Fosler C."/>
            <person name="Gabrielian A.E."/>
            <person name="Garg N.S."/>
            <person name="Gelbart W.M."/>
            <person name="Glasser K."/>
            <person name="Glodek A."/>
            <person name="Gong F."/>
            <person name="Gorrell J.H."/>
            <person name="Gu Z."/>
            <person name="Guan P."/>
            <person name="Harris M."/>
            <person name="Harris N.L."/>
            <person name="Harvey D.A."/>
            <person name="Heiman T.J."/>
            <person name="Hernandez J.R."/>
            <person name="Houck J."/>
            <person name="Hostin D."/>
            <person name="Houston K.A."/>
            <person name="Howland T.J."/>
            <person name="Wei M.-H."/>
            <person name="Ibegwam C."/>
            <person name="Jalali M."/>
            <person name="Kalush F."/>
            <person name="Karpen G.H."/>
            <person name="Ke Z."/>
            <person name="Kennison J.A."/>
            <person name="Ketchum K.A."/>
            <person name="Kimmel B.E."/>
            <person name="Kodira C.D."/>
            <person name="Kraft C.L."/>
            <person name="Kravitz S."/>
            <person name="Kulp D."/>
            <person name="Lai Z."/>
            <person name="Lasko P."/>
            <person name="Lei Y."/>
            <person name="Levitsky A.A."/>
            <person name="Li J.H."/>
            <person name="Li Z."/>
            <person name="Liang Y."/>
            <person name="Lin X."/>
            <person name="Liu X."/>
            <person name="Mattei B."/>
            <person name="McIntosh T.C."/>
            <person name="McLeod M.P."/>
            <person name="McPherson D."/>
            <person name="Merkulov G."/>
            <person name="Milshina N.V."/>
            <person name="Mobarry C."/>
            <person name="Morris J."/>
            <person name="Moshrefi A."/>
            <person name="Mount S.M."/>
            <person name="Moy M."/>
            <person name="Murphy B."/>
            <person name="Murphy L."/>
            <person name="Muzny D.M."/>
            <person name="Nelson D.L."/>
            <person name="Nelson D.R."/>
            <person name="Nelson K.A."/>
            <person name="Nixon K."/>
            <person name="Nusskern D.R."/>
            <person name="Pacleb J.M."/>
            <person name="Palazzolo M."/>
            <person name="Pittman G.S."/>
            <person name="Pan S."/>
            <person name="Pollard J."/>
            <person name="Puri V."/>
            <person name="Reese M.G."/>
            <person name="Reinert K."/>
            <person name="Remington K."/>
            <person name="Saunders R.D.C."/>
            <person name="Scheeler F."/>
            <person name="Shen H."/>
            <person name="Shue B.C."/>
            <person name="Siden-Kiamos I."/>
            <person name="Simpson M."/>
            <person name="Skupski M.P."/>
            <person name="Smith T.J."/>
            <person name="Spier E."/>
            <person name="Spradling A.C."/>
            <person name="Stapleton M."/>
            <person name="Strong R."/>
            <person name="Sun E."/>
            <person name="Svirskas R."/>
            <person name="Tector C."/>
            <person name="Turner R."/>
            <person name="Venter E."/>
            <person name="Wang A.H."/>
            <person name="Wang X."/>
            <person name="Wang Z.-Y."/>
            <person name="Wassarman D.A."/>
            <person name="Weinstock G.M."/>
            <person name="Weissenbach J."/>
            <person name="Williams S.M."/>
            <person name="Woodage T."/>
            <person name="Worley K.C."/>
            <person name="Wu D."/>
            <person name="Yang S."/>
            <person name="Yao Q.A."/>
            <person name="Ye J."/>
            <person name="Yeh R.-F."/>
            <person name="Zaveri J.S."/>
            <person name="Zhan M."/>
            <person name="Zhang G."/>
            <person name="Zhao Q."/>
            <person name="Zheng L."/>
            <person name="Zheng X.H."/>
            <person name="Zhong F.N."/>
            <person name="Zhong W."/>
            <person name="Zhou X."/>
            <person name="Zhu S.C."/>
            <person name="Zhu X."/>
            <person name="Smith H.O."/>
            <person name="Gibbs R.A."/>
            <person name="Myers E.W."/>
            <person name="Rubin G.M."/>
            <person name="Venter J.C."/>
        </authorList>
    </citation>
    <scope>NUCLEOTIDE SEQUENCE [LARGE SCALE GENOMIC DNA]</scope>
    <source>
        <strain>Berkeley</strain>
    </source>
</reference>
<reference key="3">
    <citation type="journal article" date="2002" name="Genome Biol.">
        <title>Annotation of the Drosophila melanogaster euchromatic genome: a systematic review.</title>
        <authorList>
            <person name="Misra S."/>
            <person name="Crosby M.A."/>
            <person name="Mungall C.J."/>
            <person name="Matthews B.B."/>
            <person name="Campbell K.S."/>
            <person name="Hradecky P."/>
            <person name="Huang Y."/>
            <person name="Kaminker J.S."/>
            <person name="Millburn G.H."/>
            <person name="Prochnik S.E."/>
            <person name="Smith C.D."/>
            <person name="Tupy J.L."/>
            <person name="Whitfield E.J."/>
            <person name="Bayraktaroglu L."/>
            <person name="Berman B.P."/>
            <person name="Bettencourt B.R."/>
            <person name="Celniker S.E."/>
            <person name="de Grey A.D.N.J."/>
            <person name="Drysdale R.A."/>
            <person name="Harris N.L."/>
            <person name="Richter J."/>
            <person name="Russo S."/>
            <person name="Schroeder A.J."/>
            <person name="Shu S.Q."/>
            <person name="Stapleton M."/>
            <person name="Yamada C."/>
            <person name="Ashburner M."/>
            <person name="Gelbart W.M."/>
            <person name="Rubin G.M."/>
            <person name="Lewis S.E."/>
        </authorList>
    </citation>
    <scope>GENOME REANNOTATION</scope>
    <source>
        <strain>Berkeley</strain>
    </source>
</reference>
<reference key="4">
    <citation type="journal article" date="2002" name="Genome Biol.">
        <title>A Drosophila full-length cDNA resource.</title>
        <authorList>
            <person name="Stapleton M."/>
            <person name="Carlson J.W."/>
            <person name="Brokstein P."/>
            <person name="Yu C."/>
            <person name="Champe M."/>
            <person name="George R.A."/>
            <person name="Guarin H."/>
            <person name="Kronmiller B."/>
            <person name="Pacleb J.M."/>
            <person name="Park S."/>
            <person name="Wan K.H."/>
            <person name="Rubin G.M."/>
            <person name="Celniker S.E."/>
        </authorList>
    </citation>
    <scope>NUCLEOTIDE SEQUENCE [LARGE SCALE MRNA]</scope>
    <source>
        <strain>Berkeley</strain>
        <tissue>Embryo</tissue>
    </source>
</reference>
<reference key="5">
    <citation type="journal article" date="2008" name="J. Proteome Res.">
        <title>Phosphoproteome analysis of Drosophila melanogaster embryos.</title>
        <authorList>
            <person name="Zhai B."/>
            <person name="Villen J."/>
            <person name="Beausoleil S.A."/>
            <person name="Mintseris J."/>
            <person name="Gygi S.P."/>
        </authorList>
    </citation>
    <scope>PHOSPHORYLATION [LARGE SCALE ANALYSIS] AT SER-10</scope>
    <scope>IDENTIFICATION BY MASS SPECTROMETRY</scope>
    <source>
        <tissue>Embryo</tissue>
    </source>
</reference>
<dbReference type="EMBL" id="AF091624">
    <property type="protein sequence ID" value="AAC96298.1"/>
    <property type="molecule type" value="mRNA"/>
</dbReference>
<dbReference type="EMBL" id="AE014297">
    <property type="protein sequence ID" value="AAF56198.1"/>
    <property type="molecule type" value="Genomic_DNA"/>
</dbReference>
<dbReference type="EMBL" id="AY069632">
    <property type="protein sequence ID" value="AAL39777.1"/>
    <property type="molecule type" value="mRNA"/>
</dbReference>
<dbReference type="RefSeq" id="NP_001097890.1">
    <property type="nucleotide sequence ID" value="NM_001104420.3"/>
</dbReference>
<dbReference type="RefSeq" id="NP_524466.1">
    <property type="nucleotide sequence ID" value="NM_079742.4"/>
</dbReference>
<dbReference type="SMR" id="O77237"/>
<dbReference type="BioGRID" id="67757">
    <property type="interactions" value="35"/>
</dbReference>
<dbReference type="FunCoup" id="O77237">
    <property type="interactions" value="918"/>
</dbReference>
<dbReference type="IntAct" id="O77237">
    <property type="interactions" value="18"/>
</dbReference>
<dbReference type="STRING" id="7227.FBpp0111820"/>
<dbReference type="iPTMnet" id="O77237"/>
<dbReference type="PaxDb" id="7227-FBpp0111820"/>
<dbReference type="DNASU" id="42821"/>
<dbReference type="EnsemblMetazoa" id="FBtr0084527">
    <property type="protein sequence ID" value="FBpp0083913"/>
    <property type="gene ID" value="FBgn0025574"/>
</dbReference>
<dbReference type="EnsemblMetazoa" id="FBtr0112907">
    <property type="protein sequence ID" value="FBpp0111820"/>
    <property type="gene ID" value="FBgn0025574"/>
</dbReference>
<dbReference type="GeneID" id="42821"/>
<dbReference type="KEGG" id="dme:Dmel_CG5212"/>
<dbReference type="AGR" id="FB:FBgn0025574"/>
<dbReference type="CTD" id="42821"/>
<dbReference type="FlyBase" id="FBgn0025574">
    <property type="gene designation" value="Pli"/>
</dbReference>
<dbReference type="VEuPathDB" id="VectorBase:FBgn0025574"/>
<dbReference type="eggNOG" id="KOG3842">
    <property type="taxonomic scope" value="Eukaryota"/>
</dbReference>
<dbReference type="GeneTree" id="ENSGT00950000183050"/>
<dbReference type="HOGENOM" id="CLU_029221_2_0_1"/>
<dbReference type="InParanoid" id="O77237"/>
<dbReference type="OMA" id="QIGRMPC"/>
<dbReference type="OrthoDB" id="8801906at2759"/>
<dbReference type="PhylomeDB" id="O77237"/>
<dbReference type="Reactome" id="R-DME-9020702">
    <property type="pathway name" value="Interleukin-1 signaling"/>
</dbReference>
<dbReference type="Reactome" id="R-DME-937039">
    <property type="pathway name" value="IRAK1 recruits IKK complex"/>
</dbReference>
<dbReference type="Reactome" id="R-DME-975144">
    <property type="pathway name" value="IRAK1 recruits IKK complex upon TLR7/8 or 9 stimulation"/>
</dbReference>
<dbReference type="BioGRID-ORCS" id="42821">
    <property type="hits" value="0 hits in 3 CRISPR screens"/>
</dbReference>
<dbReference type="GenomeRNAi" id="42821"/>
<dbReference type="PRO" id="PR:O77237"/>
<dbReference type="Proteomes" id="UP000000803">
    <property type="component" value="Chromosome 3R"/>
</dbReference>
<dbReference type="Bgee" id="FBgn0025574">
    <property type="expression patterns" value="Expressed in T neuron T5b (Drosophila) in embryonic/larval optic lobe (Drosophila) and 243 other cell types or tissues"/>
</dbReference>
<dbReference type="ExpressionAtlas" id="O77237">
    <property type="expression patterns" value="baseline and differential"/>
</dbReference>
<dbReference type="GO" id="GO:0009898">
    <property type="term" value="C:cytoplasmic side of plasma membrane"/>
    <property type="evidence" value="ECO:0000314"/>
    <property type="project" value="FlyBase"/>
</dbReference>
<dbReference type="GO" id="GO:0005829">
    <property type="term" value="C:cytosol"/>
    <property type="evidence" value="ECO:0000314"/>
    <property type="project" value="FlyBase"/>
</dbReference>
<dbReference type="GO" id="GO:0019207">
    <property type="term" value="F:kinase regulator activity"/>
    <property type="evidence" value="ECO:0000315"/>
    <property type="project" value="UniProtKB"/>
</dbReference>
<dbReference type="GO" id="GO:0061630">
    <property type="term" value="F:ubiquitin protein ligase activity"/>
    <property type="evidence" value="ECO:0000318"/>
    <property type="project" value="GO_Central"/>
</dbReference>
<dbReference type="GO" id="GO:0004842">
    <property type="term" value="F:ubiquitin-protein transferase activity"/>
    <property type="evidence" value="ECO:0000315"/>
    <property type="project" value="FlyBase"/>
</dbReference>
<dbReference type="GO" id="GO:0045087">
    <property type="term" value="P:innate immune response"/>
    <property type="evidence" value="ECO:0000315"/>
    <property type="project" value="FlyBase"/>
</dbReference>
<dbReference type="GO" id="GO:1905035">
    <property type="term" value="P:negative regulation of antifungal innate immune response"/>
    <property type="evidence" value="ECO:0000315"/>
    <property type="project" value="FlyBase"/>
</dbReference>
<dbReference type="GO" id="GO:1900425">
    <property type="term" value="P:negative regulation of defense response to bacterium"/>
    <property type="evidence" value="ECO:0000315"/>
    <property type="project" value="FlyBase"/>
</dbReference>
<dbReference type="GO" id="GO:0045751">
    <property type="term" value="P:negative regulation of Toll signaling pathway"/>
    <property type="evidence" value="ECO:0000315"/>
    <property type="project" value="FlyBase"/>
</dbReference>
<dbReference type="GO" id="GO:0002225">
    <property type="term" value="P:positive regulation of antimicrobial peptide production"/>
    <property type="evidence" value="ECO:0000315"/>
    <property type="project" value="FlyBase"/>
</dbReference>
<dbReference type="GO" id="GO:0045752">
    <property type="term" value="P:positive regulation of Toll signaling pathway"/>
    <property type="evidence" value="ECO:0000315"/>
    <property type="project" value="UniProtKB"/>
</dbReference>
<dbReference type="GO" id="GO:0070936">
    <property type="term" value="P:protein K48-linked ubiquitination"/>
    <property type="evidence" value="ECO:0000315"/>
    <property type="project" value="FlyBase"/>
</dbReference>
<dbReference type="GO" id="GO:0000209">
    <property type="term" value="P:protein polyubiquitination"/>
    <property type="evidence" value="ECO:0000318"/>
    <property type="project" value="GO_Central"/>
</dbReference>
<dbReference type="InterPro" id="IPR006800">
    <property type="entry name" value="Pellino_fam"/>
</dbReference>
<dbReference type="InterPro" id="IPR048334">
    <property type="entry name" value="Pellino_FHA"/>
</dbReference>
<dbReference type="InterPro" id="IPR048335">
    <property type="entry name" value="Pellino_RING"/>
</dbReference>
<dbReference type="PANTHER" id="PTHR12098">
    <property type="entry name" value="E3 UBIQUITIN-PROTEIN LIGASE PELLINO-RELATED"/>
    <property type="match status" value="1"/>
</dbReference>
<dbReference type="PANTHER" id="PTHR12098:SF2">
    <property type="entry name" value="PROTEIN PELLINO"/>
    <property type="match status" value="1"/>
</dbReference>
<dbReference type="Pfam" id="PF04710">
    <property type="entry name" value="Pellino_FHA"/>
    <property type="match status" value="1"/>
</dbReference>
<dbReference type="Pfam" id="PF20723">
    <property type="entry name" value="Pellino_RING"/>
    <property type="match status" value="1"/>
</dbReference>
<dbReference type="PIRSF" id="PIRSF038886">
    <property type="entry name" value="Pellino"/>
    <property type="match status" value="1"/>
</dbReference>